<evidence type="ECO:0000255" key="1">
    <source>
        <dbReference type="HAMAP-Rule" id="MF_01337"/>
    </source>
</evidence>
<evidence type="ECO:0000305" key="2"/>
<gene>
    <name evidence="1" type="primary">rplR</name>
    <name type="ordered locus">Ccel_0774</name>
</gene>
<sequence length="122" mass="13494">MINKTNRNKIRLRKHLRVRKKITGTAERPRMNVFRSLNNIYVQIIDDTTGNTLVSASTLDAALKGKVAKGGNKEAAKEVGKLVASKAIDKGIKKVVFDRGGYIYHGRIKELADAAREAGLDF</sequence>
<comment type="function">
    <text evidence="1">This is one of the proteins that bind and probably mediate the attachment of the 5S RNA into the large ribosomal subunit, where it forms part of the central protuberance.</text>
</comment>
<comment type="subunit">
    <text evidence="1">Part of the 50S ribosomal subunit; part of the 5S rRNA/L5/L18/L25 subcomplex. Contacts the 5S and 23S rRNAs.</text>
</comment>
<comment type="similarity">
    <text evidence="1">Belongs to the universal ribosomal protein uL18 family.</text>
</comment>
<keyword id="KW-1185">Reference proteome</keyword>
<keyword id="KW-0687">Ribonucleoprotein</keyword>
<keyword id="KW-0689">Ribosomal protein</keyword>
<keyword id="KW-0694">RNA-binding</keyword>
<keyword id="KW-0699">rRNA-binding</keyword>
<name>RL18_RUMCH</name>
<reference key="1">
    <citation type="submission" date="2009-01" db="EMBL/GenBank/DDBJ databases">
        <title>Complete sequence of Clostridium cellulolyticum H10.</title>
        <authorList>
            <consortium name="US DOE Joint Genome Institute"/>
            <person name="Lucas S."/>
            <person name="Copeland A."/>
            <person name="Lapidus A."/>
            <person name="Glavina del Rio T."/>
            <person name="Dalin E."/>
            <person name="Tice H."/>
            <person name="Bruce D."/>
            <person name="Goodwin L."/>
            <person name="Pitluck S."/>
            <person name="Chertkov O."/>
            <person name="Saunders E."/>
            <person name="Brettin T."/>
            <person name="Detter J.C."/>
            <person name="Han C."/>
            <person name="Larimer F."/>
            <person name="Land M."/>
            <person name="Hauser L."/>
            <person name="Kyrpides N."/>
            <person name="Ivanova N."/>
            <person name="Zhou J."/>
            <person name="Richardson P."/>
        </authorList>
    </citation>
    <scope>NUCLEOTIDE SEQUENCE [LARGE SCALE GENOMIC DNA]</scope>
    <source>
        <strain>ATCC 35319 / DSM 5812 / JCM 6584 / H10</strain>
    </source>
</reference>
<feature type="chain" id="PRO_1000166220" description="Large ribosomal subunit protein uL18">
    <location>
        <begin position="1"/>
        <end position="122"/>
    </location>
</feature>
<accession>B8I7Z5</accession>
<dbReference type="EMBL" id="CP001348">
    <property type="protein sequence ID" value="ACL75152.1"/>
    <property type="molecule type" value="Genomic_DNA"/>
</dbReference>
<dbReference type="RefSeq" id="WP_015924317.1">
    <property type="nucleotide sequence ID" value="NC_011898.1"/>
</dbReference>
<dbReference type="SMR" id="B8I7Z5"/>
<dbReference type="STRING" id="394503.Ccel_0774"/>
<dbReference type="KEGG" id="cce:Ccel_0774"/>
<dbReference type="eggNOG" id="COG0256">
    <property type="taxonomic scope" value="Bacteria"/>
</dbReference>
<dbReference type="HOGENOM" id="CLU_098841_0_1_9"/>
<dbReference type="OrthoDB" id="9810939at2"/>
<dbReference type="Proteomes" id="UP000001349">
    <property type="component" value="Chromosome"/>
</dbReference>
<dbReference type="GO" id="GO:0022625">
    <property type="term" value="C:cytosolic large ribosomal subunit"/>
    <property type="evidence" value="ECO:0007669"/>
    <property type="project" value="TreeGrafter"/>
</dbReference>
<dbReference type="GO" id="GO:0008097">
    <property type="term" value="F:5S rRNA binding"/>
    <property type="evidence" value="ECO:0007669"/>
    <property type="project" value="TreeGrafter"/>
</dbReference>
<dbReference type="GO" id="GO:0003735">
    <property type="term" value="F:structural constituent of ribosome"/>
    <property type="evidence" value="ECO:0007669"/>
    <property type="project" value="InterPro"/>
</dbReference>
<dbReference type="GO" id="GO:0006412">
    <property type="term" value="P:translation"/>
    <property type="evidence" value="ECO:0007669"/>
    <property type="project" value="UniProtKB-UniRule"/>
</dbReference>
<dbReference type="CDD" id="cd00432">
    <property type="entry name" value="Ribosomal_L18_L5e"/>
    <property type="match status" value="1"/>
</dbReference>
<dbReference type="FunFam" id="3.30.420.100:FF:000001">
    <property type="entry name" value="50S ribosomal protein L18"/>
    <property type="match status" value="1"/>
</dbReference>
<dbReference type="Gene3D" id="3.30.420.100">
    <property type="match status" value="1"/>
</dbReference>
<dbReference type="HAMAP" id="MF_01337_B">
    <property type="entry name" value="Ribosomal_uL18_B"/>
    <property type="match status" value="1"/>
</dbReference>
<dbReference type="InterPro" id="IPR004389">
    <property type="entry name" value="Ribosomal_uL18_bac-type"/>
</dbReference>
<dbReference type="InterPro" id="IPR005484">
    <property type="entry name" value="Ribosomal_uL18_bac/euk"/>
</dbReference>
<dbReference type="NCBIfam" id="TIGR00060">
    <property type="entry name" value="L18_bact"/>
    <property type="match status" value="1"/>
</dbReference>
<dbReference type="PANTHER" id="PTHR12899">
    <property type="entry name" value="39S RIBOSOMAL PROTEIN L18, MITOCHONDRIAL"/>
    <property type="match status" value="1"/>
</dbReference>
<dbReference type="PANTHER" id="PTHR12899:SF3">
    <property type="entry name" value="LARGE RIBOSOMAL SUBUNIT PROTEIN UL18M"/>
    <property type="match status" value="1"/>
</dbReference>
<dbReference type="Pfam" id="PF00861">
    <property type="entry name" value="Ribosomal_L18p"/>
    <property type="match status" value="1"/>
</dbReference>
<dbReference type="SUPFAM" id="SSF53137">
    <property type="entry name" value="Translational machinery components"/>
    <property type="match status" value="1"/>
</dbReference>
<protein>
    <recommendedName>
        <fullName evidence="1">Large ribosomal subunit protein uL18</fullName>
    </recommendedName>
    <alternativeName>
        <fullName evidence="2">50S ribosomal protein L18</fullName>
    </alternativeName>
</protein>
<organism>
    <name type="scientific">Ruminiclostridium cellulolyticum (strain ATCC 35319 / DSM 5812 / JCM 6584 / H10)</name>
    <name type="common">Clostridium cellulolyticum</name>
    <dbReference type="NCBI Taxonomy" id="394503"/>
    <lineage>
        <taxon>Bacteria</taxon>
        <taxon>Bacillati</taxon>
        <taxon>Bacillota</taxon>
        <taxon>Clostridia</taxon>
        <taxon>Eubacteriales</taxon>
        <taxon>Oscillospiraceae</taxon>
        <taxon>Ruminiclostridium</taxon>
    </lineage>
</organism>
<proteinExistence type="inferred from homology"/>